<accession>P24461</accession>
<keyword id="KW-0903">Direct protein sequencing</keyword>
<keyword id="KW-0256">Endoplasmic reticulum</keyword>
<keyword id="KW-0349">Heme</keyword>
<keyword id="KW-0408">Iron</keyword>
<keyword id="KW-0472">Membrane</keyword>
<keyword id="KW-0479">Metal-binding</keyword>
<keyword id="KW-0492">Microsome</keyword>
<keyword id="KW-0503">Monooxygenase</keyword>
<keyword id="KW-0552">Olfaction</keyword>
<keyword id="KW-0560">Oxidoreductase</keyword>
<keyword id="KW-1185">Reference proteome</keyword>
<keyword id="KW-0716">Sensory transduction</keyword>
<sequence>MELGGAFTIFLALCFSCLLILIAWKRVQKPGRLPPGPTPIPFLGNLLQVRTDATFQSFLKLREKYGPVFTVYMGPRPVVILCGHEAVKEALVDRADEFSGRGELASVERNFQGHGVALANGERWRILRRFSLTILRDFGMGKRSIEERIQEEAGYLLEEFRKTKGAPIDPTFFLSRTVSNVISSVVFGSRFDYEDKQFLSLLRMINESFIEMSTPWAQLYDMYSGVMQYLPGRHNRIYYLIEELKDFIAARVKVNEASLDPQNPRDFIDCFLIKMHQDKNNPHTEFNLKNLVLTTLNLFFAGTETVSSTLRYGFLLIMKHPEVQTKIYEEINQVIGPHRIPSVDDRVKMPFTDAVIHEIQRLTDIVPMGVPHNVIRDTHFRGYLLPKGTDVFPLLGSVLKDPKYFCHPDDFYPQHFLDEQGRFKKNEAFVPFSSGKRICLGEAMARMELFLYFTSILQNFSLHPLVPPVNIDITPKISGFGNIPPTYELCLIAR</sequence>
<dbReference type="EC" id="1.14.14.1"/>
<dbReference type="PIR" id="S13907">
    <property type="entry name" value="B31944"/>
</dbReference>
<dbReference type="RefSeq" id="NP_001182693.1">
    <property type="nucleotide sequence ID" value="NM_001195764.1"/>
</dbReference>
<dbReference type="SMR" id="P24461"/>
<dbReference type="FunCoup" id="P24461">
    <property type="interactions" value="429"/>
</dbReference>
<dbReference type="STRING" id="9986.ENSOCUP00000004975"/>
<dbReference type="PaxDb" id="9986-ENSOCUP00000004975"/>
<dbReference type="Ensembl" id="ENSOCUT00000005743.3">
    <property type="protein sequence ID" value="ENSOCUP00000004975.2"/>
    <property type="gene ID" value="ENSOCUG00000005745.3"/>
</dbReference>
<dbReference type="GeneID" id="100359338"/>
<dbReference type="KEGG" id="ocu:100359338"/>
<dbReference type="CTD" id="13108"/>
<dbReference type="eggNOG" id="KOG0156">
    <property type="taxonomic scope" value="Eukaryota"/>
</dbReference>
<dbReference type="GeneTree" id="ENSGT00940000161670"/>
<dbReference type="HOGENOM" id="CLU_001570_22_3_1"/>
<dbReference type="InParanoid" id="P24461"/>
<dbReference type="OMA" id="IPPTYKL"/>
<dbReference type="OrthoDB" id="3934656at2759"/>
<dbReference type="TreeFam" id="TF352043"/>
<dbReference type="Proteomes" id="UP000001811">
    <property type="component" value="Unplaced"/>
</dbReference>
<dbReference type="Bgee" id="ENSOCUG00000005745">
    <property type="expression patterns" value="Expressed in upper lobe of left lung and 4 other cell types or tissues"/>
</dbReference>
<dbReference type="GO" id="GO:0005789">
    <property type="term" value="C:endoplasmic reticulum membrane"/>
    <property type="evidence" value="ECO:0007669"/>
    <property type="project" value="UniProtKB-SubCell"/>
</dbReference>
<dbReference type="GO" id="GO:0008392">
    <property type="term" value="F:arachidonate epoxygenase activity"/>
    <property type="evidence" value="ECO:0007669"/>
    <property type="project" value="TreeGrafter"/>
</dbReference>
<dbReference type="GO" id="GO:0020037">
    <property type="term" value="F:heme binding"/>
    <property type="evidence" value="ECO:0007669"/>
    <property type="project" value="InterPro"/>
</dbReference>
<dbReference type="GO" id="GO:0005506">
    <property type="term" value="F:iron ion binding"/>
    <property type="evidence" value="ECO:0007669"/>
    <property type="project" value="InterPro"/>
</dbReference>
<dbReference type="GO" id="GO:0016712">
    <property type="term" value="F:oxidoreductase activity, acting on paired donors, with incorporation or reduction of molecular oxygen, reduced flavin or flavoprotein as one donor, and incorporation of one atom of oxygen"/>
    <property type="evidence" value="ECO:0007669"/>
    <property type="project" value="UniProtKB-EC"/>
</dbReference>
<dbReference type="GO" id="GO:0019373">
    <property type="term" value="P:epoxygenase P450 pathway"/>
    <property type="evidence" value="ECO:0007669"/>
    <property type="project" value="TreeGrafter"/>
</dbReference>
<dbReference type="GO" id="GO:0007608">
    <property type="term" value="P:sensory perception of smell"/>
    <property type="evidence" value="ECO:0007669"/>
    <property type="project" value="UniProtKB-KW"/>
</dbReference>
<dbReference type="GO" id="GO:0006805">
    <property type="term" value="P:xenobiotic metabolic process"/>
    <property type="evidence" value="ECO:0007669"/>
    <property type="project" value="TreeGrafter"/>
</dbReference>
<dbReference type="CDD" id="cd20670">
    <property type="entry name" value="CYP2G"/>
    <property type="match status" value="1"/>
</dbReference>
<dbReference type="FunFam" id="1.10.630.10:FF:000001">
    <property type="entry name" value="Cytochrome P450, family 2"/>
    <property type="match status" value="1"/>
</dbReference>
<dbReference type="Gene3D" id="1.10.630.10">
    <property type="entry name" value="Cytochrome P450"/>
    <property type="match status" value="1"/>
</dbReference>
<dbReference type="InterPro" id="IPR001128">
    <property type="entry name" value="Cyt_P450"/>
</dbReference>
<dbReference type="InterPro" id="IPR017972">
    <property type="entry name" value="Cyt_P450_CS"/>
</dbReference>
<dbReference type="InterPro" id="IPR002401">
    <property type="entry name" value="Cyt_P450_E_grp-I"/>
</dbReference>
<dbReference type="InterPro" id="IPR008067">
    <property type="entry name" value="Cyt_P450_E_grp-I_CYP2A-like"/>
</dbReference>
<dbReference type="InterPro" id="IPR036396">
    <property type="entry name" value="Cyt_P450_sf"/>
</dbReference>
<dbReference type="InterPro" id="IPR050182">
    <property type="entry name" value="Cytochrome_P450_fam2"/>
</dbReference>
<dbReference type="PANTHER" id="PTHR24300:SF424">
    <property type="entry name" value="CYTOCHROME P450"/>
    <property type="match status" value="1"/>
</dbReference>
<dbReference type="PANTHER" id="PTHR24300">
    <property type="entry name" value="CYTOCHROME P450 508A4-RELATED"/>
    <property type="match status" value="1"/>
</dbReference>
<dbReference type="Pfam" id="PF00067">
    <property type="entry name" value="p450"/>
    <property type="match status" value="1"/>
</dbReference>
<dbReference type="PRINTS" id="PR00463">
    <property type="entry name" value="EP450I"/>
</dbReference>
<dbReference type="PRINTS" id="PR01684">
    <property type="entry name" value="EP450ICYP2A"/>
</dbReference>
<dbReference type="PRINTS" id="PR00385">
    <property type="entry name" value="P450"/>
</dbReference>
<dbReference type="SUPFAM" id="SSF48264">
    <property type="entry name" value="Cytochrome P450"/>
    <property type="match status" value="1"/>
</dbReference>
<dbReference type="PROSITE" id="PS00086">
    <property type="entry name" value="CYTOCHROME_P450"/>
    <property type="match status" value="1"/>
</dbReference>
<protein>
    <recommendedName>
        <fullName>Cytochrome P450 2G1</fullName>
        <ecNumber>1.14.14.1</ecNumber>
    </recommendedName>
    <alternativeName>
        <fullName>CYPIIG1</fullName>
    </alternativeName>
    <alternativeName>
        <fullName>Cytochrome P450 olfactive</fullName>
    </alternativeName>
    <alternativeName>
        <fullName>Cytochrome P450-NMB</fullName>
    </alternativeName>
</protein>
<comment type="function">
    <text>Cytochromes P450 are a group of heme-thiolate monooxygenases. This isozyme seems to be implicated in olfaction.</text>
</comment>
<comment type="catalytic activity">
    <reaction>
        <text>an organic molecule + reduced [NADPH--hemoprotein reductase] + O2 = an alcohol + oxidized [NADPH--hemoprotein reductase] + H2O + H(+)</text>
        <dbReference type="Rhea" id="RHEA:17149"/>
        <dbReference type="Rhea" id="RHEA-COMP:11964"/>
        <dbReference type="Rhea" id="RHEA-COMP:11965"/>
        <dbReference type="ChEBI" id="CHEBI:15377"/>
        <dbReference type="ChEBI" id="CHEBI:15378"/>
        <dbReference type="ChEBI" id="CHEBI:15379"/>
        <dbReference type="ChEBI" id="CHEBI:30879"/>
        <dbReference type="ChEBI" id="CHEBI:57618"/>
        <dbReference type="ChEBI" id="CHEBI:58210"/>
        <dbReference type="ChEBI" id="CHEBI:142491"/>
        <dbReference type="EC" id="1.14.14.1"/>
    </reaction>
</comment>
<comment type="cofactor">
    <cofactor evidence="1">
        <name>heme</name>
        <dbReference type="ChEBI" id="CHEBI:30413"/>
    </cofactor>
</comment>
<comment type="subcellular location">
    <subcellularLocation>
        <location>Endoplasmic reticulum membrane</location>
        <topology>Peripheral membrane protein</topology>
    </subcellularLocation>
    <subcellularLocation>
        <location>Microsome membrane</location>
        <topology>Peripheral membrane protein</topology>
    </subcellularLocation>
</comment>
<comment type="tissue specificity">
    <text>Olfactory epithelium.</text>
</comment>
<comment type="similarity">
    <text evidence="2">Belongs to the cytochrome P450 family.</text>
</comment>
<organism>
    <name type="scientific">Oryctolagus cuniculus</name>
    <name type="common">Rabbit</name>
    <dbReference type="NCBI Taxonomy" id="9986"/>
    <lineage>
        <taxon>Eukaryota</taxon>
        <taxon>Metazoa</taxon>
        <taxon>Chordata</taxon>
        <taxon>Craniata</taxon>
        <taxon>Vertebrata</taxon>
        <taxon>Euteleostomi</taxon>
        <taxon>Mammalia</taxon>
        <taxon>Eutheria</taxon>
        <taxon>Euarchontoglires</taxon>
        <taxon>Glires</taxon>
        <taxon>Lagomorpha</taxon>
        <taxon>Leporidae</taxon>
        <taxon>Oryctolagus</taxon>
    </lineage>
</organism>
<proteinExistence type="evidence at protein level"/>
<name>CP2G1_RABIT</name>
<evidence type="ECO:0000250" key="1"/>
<evidence type="ECO:0000305" key="2"/>
<gene>
    <name type="primary">CYP2G1</name>
</gene>
<feature type="chain" id="PRO_0000051764" description="Cytochrome P450 2G1">
    <location>
        <begin position="1"/>
        <end position="494"/>
    </location>
</feature>
<feature type="binding site" description="axial binding residue" evidence="1">
    <location>
        <position position="439"/>
    </location>
    <ligand>
        <name>heme</name>
        <dbReference type="ChEBI" id="CHEBI:30413"/>
    </ligand>
    <ligandPart>
        <name>Fe</name>
        <dbReference type="ChEBI" id="CHEBI:18248"/>
    </ligandPart>
</feature>
<feature type="sequence conflict" description="In Ref. 2; AA sequence." evidence="2" ref="2">
    <original>L</original>
    <variation>E</variation>
    <location>
        <position position="46"/>
    </location>
</feature>
<reference key="1">
    <citation type="journal article" date="1991" name="Arch. Biochem. Biophys.">
        <title>cDNA and derived amino acid sequence of rabbit nasal cytochrome P450NMb (P450IIG1), a unique isozyme possibly involved in olfaction.</title>
        <authorList>
            <person name="Ding X."/>
            <person name="Porter T.D."/>
            <person name="Peng H.-M."/>
            <person name="Coon M.J."/>
        </authorList>
    </citation>
    <scope>NUCLEOTIDE SEQUENCE</scope>
</reference>
<reference key="2">
    <citation type="journal article" date="1988" name="Biochemistry">
        <title>Purification and characterization of two unique forms of cytochrome P-450 from rabbit nasal microsomes.</title>
        <authorList>
            <person name="Ding X.X."/>
            <person name="Coon M.J."/>
        </authorList>
    </citation>
    <scope>PROTEIN SEQUENCE OF 1-50</scope>
</reference>